<protein>
    <recommendedName>
        <fullName evidence="1">2,3-bisphosphoglycerate-independent phosphoglycerate mutase</fullName>
        <shortName evidence="1">BPG-independent PGAM</shortName>
        <shortName evidence="1">Phosphoglyceromutase</shortName>
        <shortName evidence="1">iPGM</shortName>
        <ecNumber evidence="1">5.4.2.12</ecNumber>
    </recommendedName>
</protein>
<gene>
    <name evidence="1" type="primary">gpmI</name>
    <name type="ordered locus">Sbal195_0047</name>
</gene>
<evidence type="ECO:0000255" key="1">
    <source>
        <dbReference type="HAMAP-Rule" id="MF_01038"/>
    </source>
</evidence>
<keyword id="KW-0324">Glycolysis</keyword>
<keyword id="KW-0413">Isomerase</keyword>
<keyword id="KW-0464">Manganese</keyword>
<keyword id="KW-0479">Metal-binding</keyword>
<feature type="chain" id="PRO_1000084311" description="2,3-bisphosphoglycerate-independent phosphoglycerate mutase">
    <location>
        <begin position="1"/>
        <end position="514"/>
    </location>
</feature>
<feature type="active site" description="Phosphoserine intermediate" evidence="1">
    <location>
        <position position="64"/>
    </location>
</feature>
<feature type="binding site" evidence="1">
    <location>
        <position position="14"/>
    </location>
    <ligand>
        <name>Mn(2+)</name>
        <dbReference type="ChEBI" id="CHEBI:29035"/>
        <label>2</label>
    </ligand>
</feature>
<feature type="binding site" evidence="1">
    <location>
        <position position="64"/>
    </location>
    <ligand>
        <name>Mn(2+)</name>
        <dbReference type="ChEBI" id="CHEBI:29035"/>
        <label>2</label>
    </ligand>
</feature>
<feature type="binding site" evidence="1">
    <location>
        <position position="125"/>
    </location>
    <ligand>
        <name>substrate</name>
    </ligand>
</feature>
<feature type="binding site" evidence="1">
    <location>
        <begin position="155"/>
        <end position="156"/>
    </location>
    <ligand>
        <name>substrate</name>
    </ligand>
</feature>
<feature type="binding site" evidence="1">
    <location>
        <position position="187"/>
    </location>
    <ligand>
        <name>substrate</name>
    </ligand>
</feature>
<feature type="binding site" evidence="1">
    <location>
        <position position="193"/>
    </location>
    <ligand>
        <name>substrate</name>
    </ligand>
</feature>
<feature type="binding site" evidence="1">
    <location>
        <begin position="263"/>
        <end position="266"/>
    </location>
    <ligand>
        <name>substrate</name>
    </ligand>
</feature>
<feature type="binding site" evidence="1">
    <location>
        <position position="336"/>
    </location>
    <ligand>
        <name>substrate</name>
    </ligand>
</feature>
<feature type="binding site" evidence="1">
    <location>
        <position position="403"/>
    </location>
    <ligand>
        <name>Mn(2+)</name>
        <dbReference type="ChEBI" id="CHEBI:29035"/>
        <label>1</label>
    </ligand>
</feature>
<feature type="binding site" evidence="1">
    <location>
        <position position="407"/>
    </location>
    <ligand>
        <name>Mn(2+)</name>
        <dbReference type="ChEBI" id="CHEBI:29035"/>
        <label>1</label>
    </ligand>
</feature>
<feature type="binding site" evidence="1">
    <location>
        <position position="444"/>
    </location>
    <ligand>
        <name>Mn(2+)</name>
        <dbReference type="ChEBI" id="CHEBI:29035"/>
        <label>2</label>
    </ligand>
</feature>
<feature type="binding site" evidence="1">
    <location>
        <position position="445"/>
    </location>
    <ligand>
        <name>Mn(2+)</name>
        <dbReference type="ChEBI" id="CHEBI:29035"/>
        <label>2</label>
    </ligand>
</feature>
<feature type="binding site" evidence="1">
    <location>
        <position position="463"/>
    </location>
    <ligand>
        <name>Mn(2+)</name>
        <dbReference type="ChEBI" id="CHEBI:29035"/>
        <label>1</label>
    </ligand>
</feature>
<proteinExistence type="inferred from homology"/>
<sequence>MTTAKRPLALLILDGWGYRENTHNNAIFHANTPVLDRLNAQYPHSLISGSGLDVGLPDGQMGNSEVGHINLGSGRVVYQELTRISKAIADHEFEQNPALCDAVDSAIKAGGAVHIMGLLSPGGVHSHEEHIEAMCRMAVARGATKVYLHAFLDGRDTPPRSAKSSLSHFDDLFTTLGHGRIASIIGRYFAMDRDNRWDRVSQAYDLITQGKSKFQYDNAVTALEAAYERNENDEFVSSSAITDADGQVATLQDGDALIFMNFRADRARQITRSFINPDFDGFERAVVPKMHFVTLTEYAGDIKAPIAYPSENLVNTLGEVLQKQGRTQLRISETEKYAHVTFFFNGGKEEPFEGEDRILINSPKVATYDLQPEMSSAELTDKLVAAIESTKYDVIICNYPNGDMVGHTGNFDAAVKACEAVDACIGCVVDALAKVGGECIITADHGNAEQMTDETTGQAHTAHTSELVPFVFVGRDATIDEGGKLSDVAPTILTLIGEAIPAEMTGKPLIHIKE</sequence>
<reference key="1">
    <citation type="submission" date="2007-11" db="EMBL/GenBank/DDBJ databases">
        <title>Complete sequence of chromosome of Shewanella baltica OS195.</title>
        <authorList>
            <consortium name="US DOE Joint Genome Institute"/>
            <person name="Copeland A."/>
            <person name="Lucas S."/>
            <person name="Lapidus A."/>
            <person name="Barry K."/>
            <person name="Glavina del Rio T."/>
            <person name="Dalin E."/>
            <person name="Tice H."/>
            <person name="Pitluck S."/>
            <person name="Chain P."/>
            <person name="Malfatti S."/>
            <person name="Shin M."/>
            <person name="Vergez L."/>
            <person name="Schmutz J."/>
            <person name="Larimer F."/>
            <person name="Land M."/>
            <person name="Hauser L."/>
            <person name="Kyrpides N."/>
            <person name="Kim E."/>
            <person name="Brettar I."/>
            <person name="Rodrigues J."/>
            <person name="Konstantinidis K."/>
            <person name="Klappenbach J."/>
            <person name="Hofle M."/>
            <person name="Tiedje J."/>
            <person name="Richardson P."/>
        </authorList>
    </citation>
    <scope>NUCLEOTIDE SEQUENCE [LARGE SCALE GENOMIC DNA]</scope>
    <source>
        <strain>OS195</strain>
    </source>
</reference>
<comment type="function">
    <text evidence="1">Catalyzes the interconversion of 2-phosphoglycerate and 3-phosphoglycerate.</text>
</comment>
<comment type="catalytic activity">
    <reaction evidence="1">
        <text>(2R)-2-phosphoglycerate = (2R)-3-phosphoglycerate</text>
        <dbReference type="Rhea" id="RHEA:15901"/>
        <dbReference type="ChEBI" id="CHEBI:58272"/>
        <dbReference type="ChEBI" id="CHEBI:58289"/>
        <dbReference type="EC" id="5.4.2.12"/>
    </reaction>
</comment>
<comment type="cofactor">
    <cofactor evidence="1">
        <name>Mn(2+)</name>
        <dbReference type="ChEBI" id="CHEBI:29035"/>
    </cofactor>
    <text evidence="1">Binds 2 manganese ions per subunit.</text>
</comment>
<comment type="pathway">
    <text evidence="1">Carbohydrate degradation; glycolysis; pyruvate from D-glyceraldehyde 3-phosphate: step 3/5.</text>
</comment>
<comment type="subunit">
    <text evidence="1">Monomer.</text>
</comment>
<comment type="similarity">
    <text evidence="1">Belongs to the BPG-independent phosphoglycerate mutase family.</text>
</comment>
<accession>A9KUB8</accession>
<name>GPMI_SHEB9</name>
<dbReference type="EC" id="5.4.2.12" evidence="1"/>
<dbReference type="EMBL" id="CP000891">
    <property type="protein sequence ID" value="ABX47229.1"/>
    <property type="molecule type" value="Genomic_DNA"/>
</dbReference>
<dbReference type="SMR" id="A9KUB8"/>
<dbReference type="KEGG" id="sbn:Sbal195_0047"/>
<dbReference type="HOGENOM" id="CLU_026099_2_0_6"/>
<dbReference type="UniPathway" id="UPA00109">
    <property type="reaction ID" value="UER00186"/>
</dbReference>
<dbReference type="Proteomes" id="UP000000770">
    <property type="component" value="Chromosome"/>
</dbReference>
<dbReference type="GO" id="GO:0005829">
    <property type="term" value="C:cytosol"/>
    <property type="evidence" value="ECO:0007669"/>
    <property type="project" value="TreeGrafter"/>
</dbReference>
<dbReference type="GO" id="GO:0030145">
    <property type="term" value="F:manganese ion binding"/>
    <property type="evidence" value="ECO:0007669"/>
    <property type="project" value="UniProtKB-UniRule"/>
</dbReference>
<dbReference type="GO" id="GO:0004619">
    <property type="term" value="F:phosphoglycerate mutase activity"/>
    <property type="evidence" value="ECO:0007669"/>
    <property type="project" value="UniProtKB-EC"/>
</dbReference>
<dbReference type="GO" id="GO:0006007">
    <property type="term" value="P:glucose catabolic process"/>
    <property type="evidence" value="ECO:0007669"/>
    <property type="project" value="InterPro"/>
</dbReference>
<dbReference type="GO" id="GO:0006096">
    <property type="term" value="P:glycolytic process"/>
    <property type="evidence" value="ECO:0007669"/>
    <property type="project" value="UniProtKB-UniRule"/>
</dbReference>
<dbReference type="CDD" id="cd16010">
    <property type="entry name" value="iPGM"/>
    <property type="match status" value="1"/>
</dbReference>
<dbReference type="FunFam" id="3.40.1450.10:FF:000001">
    <property type="entry name" value="2,3-bisphosphoglycerate-independent phosphoglycerate mutase"/>
    <property type="match status" value="1"/>
</dbReference>
<dbReference type="FunFam" id="3.40.720.10:FF:000001">
    <property type="entry name" value="2,3-bisphosphoglycerate-independent phosphoglycerate mutase"/>
    <property type="match status" value="1"/>
</dbReference>
<dbReference type="Gene3D" id="3.40.720.10">
    <property type="entry name" value="Alkaline Phosphatase, subunit A"/>
    <property type="match status" value="1"/>
</dbReference>
<dbReference type="Gene3D" id="3.40.1450.10">
    <property type="entry name" value="BPG-independent phosphoglycerate mutase, domain B"/>
    <property type="match status" value="1"/>
</dbReference>
<dbReference type="HAMAP" id="MF_01038">
    <property type="entry name" value="GpmI"/>
    <property type="match status" value="1"/>
</dbReference>
<dbReference type="InterPro" id="IPR017850">
    <property type="entry name" value="Alkaline_phosphatase_core_sf"/>
</dbReference>
<dbReference type="InterPro" id="IPR011258">
    <property type="entry name" value="BPG-indep_PGM_N"/>
</dbReference>
<dbReference type="InterPro" id="IPR006124">
    <property type="entry name" value="Metalloenzyme"/>
</dbReference>
<dbReference type="InterPro" id="IPR036646">
    <property type="entry name" value="PGAM_B_sf"/>
</dbReference>
<dbReference type="InterPro" id="IPR005995">
    <property type="entry name" value="Pgm_bpd_ind"/>
</dbReference>
<dbReference type="NCBIfam" id="TIGR01307">
    <property type="entry name" value="pgm_bpd_ind"/>
    <property type="match status" value="1"/>
</dbReference>
<dbReference type="NCBIfam" id="NF003897">
    <property type="entry name" value="PRK05434.1-5"/>
    <property type="match status" value="1"/>
</dbReference>
<dbReference type="PANTHER" id="PTHR31637">
    <property type="entry name" value="2,3-BISPHOSPHOGLYCERATE-INDEPENDENT PHOSPHOGLYCERATE MUTASE"/>
    <property type="match status" value="1"/>
</dbReference>
<dbReference type="PANTHER" id="PTHR31637:SF0">
    <property type="entry name" value="2,3-BISPHOSPHOGLYCERATE-INDEPENDENT PHOSPHOGLYCERATE MUTASE"/>
    <property type="match status" value="1"/>
</dbReference>
<dbReference type="Pfam" id="PF06415">
    <property type="entry name" value="iPGM_N"/>
    <property type="match status" value="1"/>
</dbReference>
<dbReference type="Pfam" id="PF01676">
    <property type="entry name" value="Metalloenzyme"/>
    <property type="match status" value="1"/>
</dbReference>
<dbReference type="PIRSF" id="PIRSF001492">
    <property type="entry name" value="IPGAM"/>
    <property type="match status" value="1"/>
</dbReference>
<dbReference type="SUPFAM" id="SSF64158">
    <property type="entry name" value="2,3-Bisphosphoglycerate-independent phosphoglycerate mutase, substrate-binding domain"/>
    <property type="match status" value="1"/>
</dbReference>
<dbReference type="SUPFAM" id="SSF53649">
    <property type="entry name" value="Alkaline phosphatase-like"/>
    <property type="match status" value="1"/>
</dbReference>
<organism>
    <name type="scientific">Shewanella baltica (strain OS195)</name>
    <dbReference type="NCBI Taxonomy" id="399599"/>
    <lineage>
        <taxon>Bacteria</taxon>
        <taxon>Pseudomonadati</taxon>
        <taxon>Pseudomonadota</taxon>
        <taxon>Gammaproteobacteria</taxon>
        <taxon>Alteromonadales</taxon>
        <taxon>Shewanellaceae</taxon>
        <taxon>Shewanella</taxon>
    </lineage>
</organism>